<proteinExistence type="evidence at protein level"/>
<organismHost>
    <name type="scientific">Escherichia coli</name>
    <dbReference type="NCBI Taxonomy" id="562"/>
</organismHost>
<dbReference type="EMBL" id="X15001">
    <property type="protein sequence ID" value="CAA33106.1"/>
    <property type="molecule type" value="Genomic_DNA"/>
</dbReference>
<dbReference type="EMBL" id="U32222">
    <property type="protein sequence ID" value="AAC34178.1"/>
    <property type="molecule type" value="Genomic_DNA"/>
</dbReference>
<dbReference type="PIR" id="S03593">
    <property type="entry name" value="S03593"/>
</dbReference>
<dbReference type="RefSeq" id="NP_052281.1">
    <property type="nucleotide sequence ID" value="NC_001317.1"/>
</dbReference>
<dbReference type="PDB" id="6VLI">
    <property type="method" value="X-ray"/>
    <property type="resolution" value="2.10 A"/>
    <property type="chains" value="A/B/C/D=1-145"/>
</dbReference>
<dbReference type="PDB" id="6VMH">
    <property type="method" value="X-ray"/>
    <property type="resolution" value="2.75 A"/>
    <property type="chains" value="B/C=1-135"/>
</dbReference>
<dbReference type="PDB" id="6VPE">
    <property type="method" value="X-ray"/>
    <property type="resolution" value="2.21 A"/>
    <property type="chains" value="A/B=1-145"/>
</dbReference>
<dbReference type="PDBsum" id="6VLI"/>
<dbReference type="PDBsum" id="6VMH"/>
<dbReference type="PDBsum" id="6VPE"/>
<dbReference type="SMR" id="P21678"/>
<dbReference type="GeneID" id="1262431"/>
<dbReference type="KEGG" id="vg:1262431"/>
<dbReference type="OrthoDB" id="13468at10239"/>
<dbReference type="Proteomes" id="UP000000369">
    <property type="component" value="Segment"/>
</dbReference>
<dbReference type="GO" id="GO:0003677">
    <property type="term" value="F:DNA binding"/>
    <property type="evidence" value="ECO:0007669"/>
    <property type="project" value="UniProtKB-KW"/>
</dbReference>
<dbReference type="InterPro" id="IPR009679">
    <property type="entry name" value="Phage_186_CII-like"/>
</dbReference>
<dbReference type="Pfam" id="PF06892">
    <property type="entry name" value="Phage_CP76"/>
    <property type="match status" value="1"/>
</dbReference>
<gene>
    <name type="primary">CII</name>
    <name type="synonym">CP76</name>
</gene>
<keyword id="KW-0002">3D-structure</keyword>
<keyword id="KW-0010">Activator</keyword>
<keyword id="KW-0238">DNA-binding</keyword>
<keyword id="KW-0244">Early protein</keyword>
<keyword id="KW-1185">Reference proteome</keyword>
<keyword id="KW-0804">Transcription</keyword>
<keyword id="KW-0805">Transcription regulation</keyword>
<organism>
    <name type="scientific">Escherichia phage 186</name>
    <name type="common">Bacteriophage 186</name>
    <dbReference type="NCBI Taxonomy" id="29252"/>
    <lineage>
        <taxon>Viruses</taxon>
        <taxon>Duplodnaviria</taxon>
        <taxon>Heunggongvirae</taxon>
        <taxon>Uroviricota</taxon>
        <taxon>Caudoviricetes</taxon>
        <taxon>Peduoviridae</taxon>
        <taxon>Eganvirus</taxon>
    </lineage>
</organism>
<evidence type="ECO:0007829" key="1">
    <source>
        <dbReference type="PDB" id="6VLI"/>
    </source>
</evidence>
<accession>P21678</accession>
<name>RPC2_BP186</name>
<sequence>MFDFQVSKHPHYDEACRAFAQRHNMAKLAERAGMNVQTLRNKLNPEQPHQFTPPELWLLTDLTEDSTLVDGFLAQIHCLPCVPVNELAKDKLQSYVMRAMSELGELASGAVSDERLTTARKHNMIESVNSGIRMLSLSALALHARLQTNPAMSSVVDTMSGIGASFGLI</sequence>
<protein>
    <recommendedName>
        <fullName>Regulatory protein CII</fullName>
    </recommendedName>
</protein>
<reference key="1">
    <citation type="journal article" date="1989" name="J. Mol. Biol.">
        <title>Control of gene expression in the P2-related temperate coliphage 186. VI. Sequence analysis of the early lytic region.</title>
        <authorList>
            <person name="Richardson H."/>
            <person name="Puspurs A."/>
            <person name="Egan J.B."/>
        </authorList>
    </citation>
    <scope>NUCLEOTIDE SEQUENCE [GENOMIC DNA]</scope>
</reference>
<reference key="2">
    <citation type="journal article" date="1986" name="J. Mol. Biol.">
        <title>Control of gene expression in the P2-related template coliphages. III. DNA sequence of the major control region of phage 186.</title>
        <authorList>
            <person name="Kalionis B."/>
            <person name="Dodd I.B."/>
            <person name="Egan J.B."/>
        </authorList>
    </citation>
    <scope>NUCLEOTIDE SEQUENCE [GENOMIC DNA] OF 1-147</scope>
    <source>
        <strain>186CITSP</strain>
    </source>
</reference>
<feature type="chain" id="PRO_0000165293" description="Regulatory protein CII">
    <location>
        <begin position="1"/>
        <end position="169"/>
    </location>
</feature>
<feature type="strand" evidence="1">
    <location>
        <begin position="2"/>
        <end position="4"/>
    </location>
</feature>
<feature type="helix" evidence="1">
    <location>
        <begin position="11"/>
        <end position="22"/>
    </location>
</feature>
<feature type="helix" evidence="1">
    <location>
        <begin position="25"/>
        <end position="32"/>
    </location>
</feature>
<feature type="helix" evidence="1">
    <location>
        <begin position="36"/>
        <end position="42"/>
    </location>
</feature>
<feature type="helix" evidence="1">
    <location>
        <begin position="53"/>
        <end position="63"/>
    </location>
</feature>
<feature type="helix" evidence="1">
    <location>
        <begin position="67"/>
        <end position="75"/>
    </location>
</feature>
<feature type="helix" evidence="1">
    <location>
        <begin position="92"/>
        <end position="111"/>
    </location>
</feature>
<feature type="helix" evidence="1">
    <location>
        <begin position="118"/>
        <end position="141"/>
    </location>
</feature>
<feature type="helix" evidence="1">
    <location>
        <begin position="142"/>
        <end position="144"/>
    </location>
</feature>
<comment type="function">
    <text>Involved in the establishment of lysogeny.</text>
</comment>